<name>Y3579_MYCTU</name>
<keyword id="KW-0489">Methyltransferase</keyword>
<keyword id="KW-1185">Reference proteome</keyword>
<keyword id="KW-0949">S-adenosyl-L-methionine</keyword>
<keyword id="KW-0808">Transferase</keyword>
<accession>P9WFY5</accession>
<accession>L0TEK2</accession>
<accession>P96861</accession>
<accession>Q7D586</accession>
<comment type="miscellaneous">
    <text>Was identified as a high-confidence drug target.</text>
</comment>
<comment type="similarity">
    <text evidence="3">Belongs to the class IV-like SAM-binding methyltransferase superfamily. RNA methyltransferase TrmH family.</text>
</comment>
<dbReference type="EC" id="2.1.1.-"/>
<dbReference type="EMBL" id="AL123456">
    <property type="protein sequence ID" value="CCP46402.1"/>
    <property type="molecule type" value="Genomic_DNA"/>
</dbReference>
<dbReference type="PIR" id="A70607">
    <property type="entry name" value="A70607"/>
</dbReference>
<dbReference type="RefSeq" id="NP_218096.1">
    <property type="nucleotide sequence ID" value="NC_000962.3"/>
</dbReference>
<dbReference type="SMR" id="P9WFY5"/>
<dbReference type="FunCoup" id="P9WFY5">
    <property type="interactions" value="127"/>
</dbReference>
<dbReference type="STRING" id="83332.Rv3579c"/>
<dbReference type="PaxDb" id="83332-Rv3579c"/>
<dbReference type="DNASU" id="888317"/>
<dbReference type="GeneID" id="888317"/>
<dbReference type="KEGG" id="mtu:Rv3579c"/>
<dbReference type="KEGG" id="mtv:RVBD_3579c"/>
<dbReference type="TubercuList" id="Rv3579c"/>
<dbReference type="eggNOG" id="COG0566">
    <property type="taxonomic scope" value="Bacteria"/>
</dbReference>
<dbReference type="InParanoid" id="P9WFY5"/>
<dbReference type="OrthoDB" id="9785673at2"/>
<dbReference type="PhylomeDB" id="P9WFY5"/>
<dbReference type="Proteomes" id="UP000001584">
    <property type="component" value="Chromosome"/>
</dbReference>
<dbReference type="GO" id="GO:0005829">
    <property type="term" value="C:cytosol"/>
    <property type="evidence" value="ECO:0000318"/>
    <property type="project" value="GO_Central"/>
</dbReference>
<dbReference type="GO" id="GO:0003723">
    <property type="term" value="F:RNA binding"/>
    <property type="evidence" value="ECO:0007669"/>
    <property type="project" value="InterPro"/>
</dbReference>
<dbReference type="GO" id="GO:0008173">
    <property type="term" value="F:RNA methyltransferase activity"/>
    <property type="evidence" value="ECO:0000318"/>
    <property type="project" value="GO_Central"/>
</dbReference>
<dbReference type="GO" id="GO:0032259">
    <property type="term" value="P:methylation"/>
    <property type="evidence" value="ECO:0007669"/>
    <property type="project" value="UniProtKB-KW"/>
</dbReference>
<dbReference type="GO" id="GO:0006396">
    <property type="term" value="P:RNA processing"/>
    <property type="evidence" value="ECO:0007669"/>
    <property type="project" value="InterPro"/>
</dbReference>
<dbReference type="CDD" id="cd18103">
    <property type="entry name" value="SpoU-like_RlmB"/>
    <property type="match status" value="1"/>
</dbReference>
<dbReference type="FunFam" id="3.30.1330.30:FF:000024">
    <property type="entry name" value="Putative tRNA/rRNA methyltransferase"/>
    <property type="match status" value="1"/>
</dbReference>
<dbReference type="FunFam" id="3.40.1280.10:FF:000015">
    <property type="entry name" value="Putative tRNA/rRNA methyltransferase"/>
    <property type="match status" value="1"/>
</dbReference>
<dbReference type="Gene3D" id="3.30.1330.30">
    <property type="match status" value="1"/>
</dbReference>
<dbReference type="Gene3D" id="3.40.1280.10">
    <property type="match status" value="1"/>
</dbReference>
<dbReference type="InterPro" id="IPR029028">
    <property type="entry name" value="Alpha/beta_knot_MTases"/>
</dbReference>
<dbReference type="InterPro" id="IPR029064">
    <property type="entry name" value="Ribosomal_eL30-like_sf"/>
</dbReference>
<dbReference type="InterPro" id="IPR004441">
    <property type="entry name" value="rRNA_MeTrfase_TrmH"/>
</dbReference>
<dbReference type="InterPro" id="IPR001537">
    <property type="entry name" value="SpoU_MeTrfase"/>
</dbReference>
<dbReference type="InterPro" id="IPR013123">
    <property type="entry name" value="SpoU_subst-bd"/>
</dbReference>
<dbReference type="InterPro" id="IPR029026">
    <property type="entry name" value="tRNA_m1G_MTases_N"/>
</dbReference>
<dbReference type="NCBIfam" id="TIGR00186">
    <property type="entry name" value="rRNA_methyl_3"/>
    <property type="match status" value="1"/>
</dbReference>
<dbReference type="PANTHER" id="PTHR46429">
    <property type="entry name" value="23S RRNA (GUANOSINE-2'-O-)-METHYLTRANSFERASE RLMB"/>
    <property type="match status" value="1"/>
</dbReference>
<dbReference type="PANTHER" id="PTHR46429:SF1">
    <property type="entry name" value="23S RRNA (GUANOSINE-2'-O-)-METHYLTRANSFERASE RLMB"/>
    <property type="match status" value="1"/>
</dbReference>
<dbReference type="Pfam" id="PF00588">
    <property type="entry name" value="SpoU_methylase"/>
    <property type="match status" value="1"/>
</dbReference>
<dbReference type="Pfam" id="PF08032">
    <property type="entry name" value="SpoU_sub_bind"/>
    <property type="match status" value="1"/>
</dbReference>
<dbReference type="SMART" id="SM00967">
    <property type="entry name" value="SpoU_sub_bind"/>
    <property type="match status" value="1"/>
</dbReference>
<dbReference type="SUPFAM" id="SSF75217">
    <property type="entry name" value="alpha/beta knot"/>
    <property type="match status" value="1"/>
</dbReference>
<dbReference type="SUPFAM" id="SSF55315">
    <property type="entry name" value="L30e-like"/>
    <property type="match status" value="1"/>
</dbReference>
<organism>
    <name type="scientific">Mycobacterium tuberculosis (strain ATCC 25618 / H37Rv)</name>
    <dbReference type="NCBI Taxonomy" id="83332"/>
    <lineage>
        <taxon>Bacteria</taxon>
        <taxon>Bacillati</taxon>
        <taxon>Actinomycetota</taxon>
        <taxon>Actinomycetes</taxon>
        <taxon>Mycobacteriales</taxon>
        <taxon>Mycobacteriaceae</taxon>
        <taxon>Mycobacterium</taxon>
        <taxon>Mycobacterium tuberculosis complex</taxon>
    </lineage>
</organism>
<feature type="chain" id="PRO_0000379581" description="Uncharacterized tRNA/rRNA methyltransferase Rv3579c">
    <location>
        <begin position="1"/>
        <end position="322"/>
    </location>
</feature>
<feature type="region of interest" description="Disordered" evidence="2">
    <location>
        <begin position="1"/>
        <end position="69"/>
    </location>
</feature>
<feature type="compositionally biased region" description="Basic residues" evidence="2">
    <location>
        <begin position="1"/>
        <end position="16"/>
    </location>
</feature>
<feature type="compositionally biased region" description="Basic residues" evidence="2">
    <location>
        <begin position="43"/>
        <end position="61"/>
    </location>
</feature>
<feature type="binding site" evidence="1">
    <location>
        <position position="261"/>
    </location>
    <ligand>
        <name>S-adenosyl-L-methionine</name>
        <dbReference type="ChEBI" id="CHEBI:59789"/>
    </ligand>
</feature>
<feature type="binding site" evidence="1">
    <location>
        <position position="281"/>
    </location>
    <ligand>
        <name>S-adenosyl-L-methionine</name>
        <dbReference type="ChEBI" id="CHEBI:59789"/>
    </ligand>
</feature>
<feature type="binding site" evidence="1">
    <location>
        <position position="290"/>
    </location>
    <ligand>
        <name>S-adenosyl-L-methionine</name>
        <dbReference type="ChEBI" id="CHEBI:59789"/>
    </ligand>
</feature>
<sequence length="322" mass="34010">MPGNSRRRGAVRKSGTKKGAGVGSGGQRRRGLEGRGPTPPAHLRPHHPAAKRARAQPRRPVKRADETETVLGRNPVLECLRAGVPATALYVALGTEADERLTECVARAADSGIAIVELLRADLDRMTANHLHQGIALQVPPYNYAHPDDLLAAALDQPPALLVALDNLSDPRNLGAIVRSVAAFGGHGVLIPQRRSASVTAVAWRTSAGAAARIPVARATNLTRTLKGWADRGVRVIGLDAGGGTALDDVDGTDSLVVVVGSEGKGLSRLVRQNCDEVVSIPMAAQAESLNASVAAGVVLAEIARQRRRPREPREQTQNRMI</sequence>
<reference key="1">
    <citation type="journal article" date="1998" name="Nature">
        <title>Deciphering the biology of Mycobacterium tuberculosis from the complete genome sequence.</title>
        <authorList>
            <person name="Cole S.T."/>
            <person name="Brosch R."/>
            <person name="Parkhill J."/>
            <person name="Garnier T."/>
            <person name="Churcher C.M."/>
            <person name="Harris D.E."/>
            <person name="Gordon S.V."/>
            <person name="Eiglmeier K."/>
            <person name="Gas S."/>
            <person name="Barry C.E. III"/>
            <person name="Tekaia F."/>
            <person name="Badcock K."/>
            <person name="Basham D."/>
            <person name="Brown D."/>
            <person name="Chillingworth T."/>
            <person name="Connor R."/>
            <person name="Davies R.M."/>
            <person name="Devlin K."/>
            <person name="Feltwell T."/>
            <person name="Gentles S."/>
            <person name="Hamlin N."/>
            <person name="Holroyd S."/>
            <person name="Hornsby T."/>
            <person name="Jagels K."/>
            <person name="Krogh A."/>
            <person name="McLean J."/>
            <person name="Moule S."/>
            <person name="Murphy L.D."/>
            <person name="Oliver S."/>
            <person name="Osborne J."/>
            <person name="Quail M.A."/>
            <person name="Rajandream M.A."/>
            <person name="Rogers J."/>
            <person name="Rutter S."/>
            <person name="Seeger K."/>
            <person name="Skelton S."/>
            <person name="Squares S."/>
            <person name="Squares R."/>
            <person name="Sulston J.E."/>
            <person name="Taylor K."/>
            <person name="Whitehead S."/>
            <person name="Barrell B.G."/>
        </authorList>
    </citation>
    <scope>NUCLEOTIDE SEQUENCE [LARGE SCALE GENOMIC DNA]</scope>
    <source>
        <strain>ATCC 25618 / H37Rv</strain>
    </source>
</reference>
<reference key="2">
    <citation type="journal article" date="2008" name="BMC Syst. Biol.">
        <title>targetTB: a target identification pipeline for Mycobacterium tuberculosis through an interactome, reactome and genome-scale structural analysis.</title>
        <authorList>
            <person name="Raman K."/>
            <person name="Yeturu K."/>
            <person name="Chandra N."/>
        </authorList>
    </citation>
    <scope>IDENTIFICATION AS A DRUG TARGET [LARGE SCALE ANALYSIS]</scope>
</reference>
<reference key="3">
    <citation type="journal article" date="2011" name="Mol. Cell. Proteomics">
        <title>Proteogenomic analysis of Mycobacterium tuberculosis by high resolution mass spectrometry.</title>
        <authorList>
            <person name="Kelkar D.S."/>
            <person name="Kumar D."/>
            <person name="Kumar P."/>
            <person name="Balakrishnan L."/>
            <person name="Muthusamy B."/>
            <person name="Yadav A.K."/>
            <person name="Shrivastava P."/>
            <person name="Marimuthu A."/>
            <person name="Anand S."/>
            <person name="Sundaram H."/>
            <person name="Kingsbury R."/>
            <person name="Harsha H.C."/>
            <person name="Nair B."/>
            <person name="Prasad T.S."/>
            <person name="Chauhan D.S."/>
            <person name="Katoch K."/>
            <person name="Katoch V.M."/>
            <person name="Kumar P."/>
            <person name="Chaerkady R."/>
            <person name="Ramachandran S."/>
            <person name="Dash D."/>
            <person name="Pandey A."/>
        </authorList>
    </citation>
    <scope>IDENTIFICATION BY MASS SPECTROMETRY [LARGE SCALE ANALYSIS]</scope>
    <source>
        <strain>ATCC 25618 / H37Rv</strain>
    </source>
</reference>
<gene>
    <name type="ordered locus">Rv3579c</name>
</gene>
<protein>
    <recommendedName>
        <fullName>Uncharacterized tRNA/rRNA methyltransferase Rv3579c</fullName>
        <ecNumber>2.1.1.-</ecNumber>
    </recommendedName>
</protein>
<evidence type="ECO:0000250" key="1"/>
<evidence type="ECO:0000256" key="2">
    <source>
        <dbReference type="SAM" id="MobiDB-lite"/>
    </source>
</evidence>
<evidence type="ECO:0000305" key="3"/>
<proteinExistence type="evidence at protein level"/>